<feature type="chain" id="PRO_1000001737" description="Phosphate acyltransferase">
    <location>
        <begin position="1"/>
        <end position="368"/>
    </location>
</feature>
<feature type="region of interest" description="Disordered" evidence="2">
    <location>
        <begin position="335"/>
        <end position="368"/>
    </location>
</feature>
<proteinExistence type="inferred from homology"/>
<keyword id="KW-0963">Cytoplasm</keyword>
<keyword id="KW-0444">Lipid biosynthesis</keyword>
<keyword id="KW-0443">Lipid metabolism</keyword>
<keyword id="KW-0594">Phospholipid biosynthesis</keyword>
<keyword id="KW-1208">Phospholipid metabolism</keyword>
<keyword id="KW-0808">Transferase</keyword>
<evidence type="ECO:0000255" key="1">
    <source>
        <dbReference type="HAMAP-Rule" id="MF_00019"/>
    </source>
</evidence>
<evidence type="ECO:0000256" key="2">
    <source>
        <dbReference type="SAM" id="MobiDB-lite"/>
    </source>
</evidence>
<protein>
    <recommendedName>
        <fullName evidence="1">Phosphate acyltransferase</fullName>
        <ecNumber evidence="1">2.3.1.274</ecNumber>
    </recommendedName>
    <alternativeName>
        <fullName evidence="1">Acyl-ACP phosphotransacylase</fullName>
    </alternativeName>
    <alternativeName>
        <fullName evidence="1">Acyl-[acyl-carrier-protein]--phosphate acyltransferase</fullName>
    </alternativeName>
    <alternativeName>
        <fullName evidence="1">Phosphate-acyl-ACP acyltransferase</fullName>
    </alternativeName>
</protein>
<reference key="1">
    <citation type="submission" date="2007-03" db="EMBL/GenBank/DDBJ databases">
        <title>Complete sequence of chromosome 1 of Burkholderia vietnamiensis G4.</title>
        <authorList>
            <consortium name="US DOE Joint Genome Institute"/>
            <person name="Copeland A."/>
            <person name="Lucas S."/>
            <person name="Lapidus A."/>
            <person name="Barry K."/>
            <person name="Detter J.C."/>
            <person name="Glavina del Rio T."/>
            <person name="Hammon N."/>
            <person name="Israni S."/>
            <person name="Dalin E."/>
            <person name="Tice H."/>
            <person name="Pitluck S."/>
            <person name="Chain P."/>
            <person name="Malfatti S."/>
            <person name="Shin M."/>
            <person name="Vergez L."/>
            <person name="Schmutz J."/>
            <person name="Larimer F."/>
            <person name="Land M."/>
            <person name="Hauser L."/>
            <person name="Kyrpides N."/>
            <person name="Tiedje J."/>
            <person name="Richardson P."/>
        </authorList>
    </citation>
    <scope>NUCLEOTIDE SEQUENCE [LARGE SCALE GENOMIC DNA]</scope>
    <source>
        <strain>G4 / LMG 22486</strain>
    </source>
</reference>
<accession>A4JCP7</accession>
<dbReference type="EC" id="2.3.1.274" evidence="1"/>
<dbReference type="EMBL" id="CP000614">
    <property type="protein sequence ID" value="ABO54050.1"/>
    <property type="molecule type" value="Genomic_DNA"/>
</dbReference>
<dbReference type="SMR" id="A4JCP7"/>
<dbReference type="KEGG" id="bvi:Bcep1808_1039"/>
<dbReference type="eggNOG" id="COG0416">
    <property type="taxonomic scope" value="Bacteria"/>
</dbReference>
<dbReference type="HOGENOM" id="CLU_039379_1_0_4"/>
<dbReference type="UniPathway" id="UPA00085"/>
<dbReference type="Proteomes" id="UP000002287">
    <property type="component" value="Chromosome 1"/>
</dbReference>
<dbReference type="GO" id="GO:0005737">
    <property type="term" value="C:cytoplasm"/>
    <property type="evidence" value="ECO:0007669"/>
    <property type="project" value="UniProtKB-SubCell"/>
</dbReference>
<dbReference type="GO" id="GO:0043811">
    <property type="term" value="F:phosphate:acyl-[acyl carrier protein] acyltransferase activity"/>
    <property type="evidence" value="ECO:0007669"/>
    <property type="project" value="UniProtKB-UniRule"/>
</dbReference>
<dbReference type="GO" id="GO:0006633">
    <property type="term" value="P:fatty acid biosynthetic process"/>
    <property type="evidence" value="ECO:0007669"/>
    <property type="project" value="UniProtKB-UniRule"/>
</dbReference>
<dbReference type="GO" id="GO:0008654">
    <property type="term" value="P:phospholipid biosynthetic process"/>
    <property type="evidence" value="ECO:0007669"/>
    <property type="project" value="UniProtKB-KW"/>
</dbReference>
<dbReference type="Gene3D" id="3.40.718.10">
    <property type="entry name" value="Isopropylmalate Dehydrogenase"/>
    <property type="match status" value="1"/>
</dbReference>
<dbReference type="HAMAP" id="MF_00019">
    <property type="entry name" value="PlsX"/>
    <property type="match status" value="1"/>
</dbReference>
<dbReference type="InterPro" id="IPR003664">
    <property type="entry name" value="FA_synthesis"/>
</dbReference>
<dbReference type="InterPro" id="IPR012281">
    <property type="entry name" value="Phospholipid_synth_PlsX-like"/>
</dbReference>
<dbReference type="NCBIfam" id="TIGR00182">
    <property type="entry name" value="plsX"/>
    <property type="match status" value="1"/>
</dbReference>
<dbReference type="PANTHER" id="PTHR30100">
    <property type="entry name" value="FATTY ACID/PHOSPHOLIPID SYNTHESIS PROTEIN PLSX"/>
    <property type="match status" value="1"/>
</dbReference>
<dbReference type="PANTHER" id="PTHR30100:SF1">
    <property type="entry name" value="PHOSPHATE ACYLTRANSFERASE"/>
    <property type="match status" value="1"/>
</dbReference>
<dbReference type="Pfam" id="PF02504">
    <property type="entry name" value="FA_synthesis"/>
    <property type="match status" value="1"/>
</dbReference>
<dbReference type="PIRSF" id="PIRSF002465">
    <property type="entry name" value="Phsphlp_syn_PlsX"/>
    <property type="match status" value="1"/>
</dbReference>
<dbReference type="SUPFAM" id="SSF53659">
    <property type="entry name" value="Isocitrate/Isopropylmalate dehydrogenase-like"/>
    <property type="match status" value="1"/>
</dbReference>
<comment type="function">
    <text evidence="1">Catalyzes the reversible formation of acyl-phosphate (acyl-PO(4)) from acyl-[acyl-carrier-protein] (acyl-ACP). This enzyme utilizes acyl-ACP as fatty acyl donor, but not acyl-CoA.</text>
</comment>
<comment type="catalytic activity">
    <reaction evidence="1">
        <text>a fatty acyl-[ACP] + phosphate = an acyl phosphate + holo-[ACP]</text>
        <dbReference type="Rhea" id="RHEA:42292"/>
        <dbReference type="Rhea" id="RHEA-COMP:9685"/>
        <dbReference type="Rhea" id="RHEA-COMP:14125"/>
        <dbReference type="ChEBI" id="CHEBI:43474"/>
        <dbReference type="ChEBI" id="CHEBI:59918"/>
        <dbReference type="ChEBI" id="CHEBI:64479"/>
        <dbReference type="ChEBI" id="CHEBI:138651"/>
        <dbReference type="EC" id="2.3.1.274"/>
    </reaction>
</comment>
<comment type="pathway">
    <text evidence="1">Lipid metabolism; phospholipid metabolism.</text>
</comment>
<comment type="subunit">
    <text evidence="1">Homodimer. Probably interacts with PlsY.</text>
</comment>
<comment type="subcellular location">
    <subcellularLocation>
        <location evidence="1">Cytoplasm</location>
    </subcellularLocation>
    <text evidence="1">Associated with the membrane possibly through PlsY.</text>
</comment>
<comment type="similarity">
    <text evidence="1">Belongs to the PlsX family.</text>
</comment>
<organism>
    <name type="scientific">Burkholderia vietnamiensis (strain G4 / LMG 22486)</name>
    <name type="common">Burkholderia cepacia (strain R1808)</name>
    <dbReference type="NCBI Taxonomy" id="269482"/>
    <lineage>
        <taxon>Bacteria</taxon>
        <taxon>Pseudomonadati</taxon>
        <taxon>Pseudomonadota</taxon>
        <taxon>Betaproteobacteria</taxon>
        <taxon>Burkholderiales</taxon>
        <taxon>Burkholderiaceae</taxon>
        <taxon>Burkholderia</taxon>
        <taxon>Burkholderia cepacia complex</taxon>
    </lineage>
</organism>
<name>PLSX_BURVG</name>
<sequence>MTVKLTIDCMGGDHGPSVTVPAAVKFVRAHPDAHLMLVGIESAIRAQLKKLKALDDPALTIVPATEVVAMDDPVEVALRKKKDSSMRVALNHVKEGAAQACISAGNTGALMAVSRYVLKTLPGIERPAIAFALPNPTGYTMMLDLGANVDCEPQHLLQFAEMGHALVAALEGKERPTIGLLNIGEEVIKGNETIKRAGELLRASTLNFRGNVEGNDIYKGTVDVIVCDGFVGNVALKTSEGLAQMLSDIIREEFGRSLMSKLMALLALPVLMRFKKRVDHRQYNGAALLGLKSLVIKSHGSADAYAFEWAIKRGYDAVKNGVLERLTRAMADNSVSLGDGEHDAGGAGHTGPAAGQHAEPPAAQSSKA</sequence>
<gene>
    <name evidence="1" type="primary">plsX</name>
    <name type="ordered locus">Bcep1808_1039</name>
</gene>